<evidence type="ECO:0000255" key="1">
    <source>
        <dbReference type="HAMAP-Rule" id="MF_01543"/>
    </source>
</evidence>
<comment type="catalytic activity">
    <reaction evidence="1">
        <text>(6S)-5,6,7,8-tetrahydrofolate + formate + ATP = (6R)-10-formyltetrahydrofolate + ADP + phosphate</text>
        <dbReference type="Rhea" id="RHEA:20221"/>
        <dbReference type="ChEBI" id="CHEBI:15740"/>
        <dbReference type="ChEBI" id="CHEBI:30616"/>
        <dbReference type="ChEBI" id="CHEBI:43474"/>
        <dbReference type="ChEBI" id="CHEBI:57453"/>
        <dbReference type="ChEBI" id="CHEBI:195366"/>
        <dbReference type="ChEBI" id="CHEBI:456216"/>
        <dbReference type="EC" id="6.3.4.3"/>
    </reaction>
</comment>
<comment type="pathway">
    <text evidence="1">One-carbon metabolism; tetrahydrofolate interconversion.</text>
</comment>
<comment type="similarity">
    <text evidence="1">Belongs to the formate--tetrahydrofolate ligase family.</text>
</comment>
<protein>
    <recommendedName>
        <fullName evidence="1">Formate--tetrahydrofolate ligase</fullName>
        <ecNumber evidence="1">6.3.4.3</ecNumber>
    </recommendedName>
    <alternativeName>
        <fullName evidence="1">Formyltetrahydrofolate synthetase</fullName>
        <shortName evidence="1">FHS</shortName>
        <shortName evidence="1">FTHFS</shortName>
    </alternativeName>
</protein>
<reference key="1">
    <citation type="journal article" date="2007" name="PLoS ONE">
        <title>Molecular correlates of host specialization in Staphylococcus aureus.</title>
        <authorList>
            <person name="Herron-Olson L."/>
            <person name="Fitzgerald J.R."/>
            <person name="Musser J.M."/>
            <person name="Kapur V."/>
        </authorList>
    </citation>
    <scope>NUCLEOTIDE SEQUENCE [LARGE SCALE GENOMIC DNA]</scope>
    <source>
        <strain>bovine RF122 / ET3-1</strain>
    </source>
</reference>
<dbReference type="EC" id="6.3.4.3" evidence="1"/>
<dbReference type="EMBL" id="AJ938182">
    <property type="protein sequence ID" value="CAI81281.1"/>
    <property type="molecule type" value="Genomic_DNA"/>
</dbReference>
<dbReference type="RefSeq" id="WP_000149395.1">
    <property type="nucleotide sequence ID" value="NC_007622.1"/>
</dbReference>
<dbReference type="SMR" id="Q2YTF6"/>
<dbReference type="KEGG" id="sab:SAB1592c"/>
<dbReference type="HOGENOM" id="CLU_003601_3_3_9"/>
<dbReference type="UniPathway" id="UPA00193"/>
<dbReference type="GO" id="GO:0005524">
    <property type="term" value="F:ATP binding"/>
    <property type="evidence" value="ECO:0007669"/>
    <property type="project" value="UniProtKB-UniRule"/>
</dbReference>
<dbReference type="GO" id="GO:0004329">
    <property type="term" value="F:formate-tetrahydrofolate ligase activity"/>
    <property type="evidence" value="ECO:0007669"/>
    <property type="project" value="UniProtKB-UniRule"/>
</dbReference>
<dbReference type="GO" id="GO:0035999">
    <property type="term" value="P:tetrahydrofolate interconversion"/>
    <property type="evidence" value="ECO:0007669"/>
    <property type="project" value="UniProtKB-UniRule"/>
</dbReference>
<dbReference type="CDD" id="cd00477">
    <property type="entry name" value="FTHFS"/>
    <property type="match status" value="1"/>
</dbReference>
<dbReference type="FunFam" id="3.30.1510.10:FF:000001">
    <property type="entry name" value="Formate--tetrahydrofolate ligase"/>
    <property type="match status" value="1"/>
</dbReference>
<dbReference type="FunFam" id="3.10.410.10:FF:000001">
    <property type="entry name" value="Putative formate--tetrahydrofolate ligase"/>
    <property type="match status" value="1"/>
</dbReference>
<dbReference type="Gene3D" id="3.30.1510.10">
    <property type="entry name" value="Domain 2, N(10)-formyltetrahydrofolate synthetase"/>
    <property type="match status" value="1"/>
</dbReference>
<dbReference type="Gene3D" id="3.10.410.10">
    <property type="entry name" value="Formyltetrahydrofolate synthetase, domain 3"/>
    <property type="match status" value="1"/>
</dbReference>
<dbReference type="Gene3D" id="3.40.50.300">
    <property type="entry name" value="P-loop containing nucleotide triphosphate hydrolases"/>
    <property type="match status" value="1"/>
</dbReference>
<dbReference type="HAMAP" id="MF_01543">
    <property type="entry name" value="FTHFS"/>
    <property type="match status" value="1"/>
</dbReference>
<dbReference type="InterPro" id="IPR000559">
    <property type="entry name" value="Formate_THF_ligase"/>
</dbReference>
<dbReference type="InterPro" id="IPR020628">
    <property type="entry name" value="Formate_THF_ligase_CS"/>
</dbReference>
<dbReference type="InterPro" id="IPR027417">
    <property type="entry name" value="P-loop_NTPase"/>
</dbReference>
<dbReference type="NCBIfam" id="NF010030">
    <property type="entry name" value="PRK13505.1"/>
    <property type="match status" value="1"/>
</dbReference>
<dbReference type="Pfam" id="PF01268">
    <property type="entry name" value="FTHFS"/>
    <property type="match status" value="1"/>
</dbReference>
<dbReference type="SUPFAM" id="SSF52540">
    <property type="entry name" value="P-loop containing nucleoside triphosphate hydrolases"/>
    <property type="match status" value="1"/>
</dbReference>
<dbReference type="PROSITE" id="PS00721">
    <property type="entry name" value="FTHFS_1"/>
    <property type="match status" value="1"/>
</dbReference>
<dbReference type="PROSITE" id="PS00722">
    <property type="entry name" value="FTHFS_2"/>
    <property type="match status" value="1"/>
</dbReference>
<gene>
    <name evidence="1" type="primary">fhs</name>
    <name type="ordered locus">SAB1592c</name>
</gene>
<feature type="chain" id="PRO_0000300543" description="Formate--tetrahydrofolate ligase">
    <location>
        <begin position="1"/>
        <end position="555"/>
    </location>
</feature>
<feature type="binding site" evidence="1">
    <location>
        <begin position="65"/>
        <end position="72"/>
    </location>
    <ligand>
        <name>ATP</name>
        <dbReference type="ChEBI" id="CHEBI:30616"/>
    </ligand>
</feature>
<sequence length="555" mass="59829">MTHLSDLDIANQSTLQPIKDIAASVGISEDALEPYGHYKAKIDINKITPRDSKGKVVLVTAMSPTPAGEGKSTVTVGLADAFHELKKNVMVALREPALGPTFGIKGGATGGGYAQVLPMEDINLHFNGDFHAITTANNALSAFIDNHIHQGNELGIDQRRIEWKRVLDMNDRALRHVNVGLGGPTNGVPREDGFNITVASEIMAILCLSRSIKDLKDKISRITIGYTRDRKPVTVADLKVQGALAMILKDAIKPNLVQSIEGTPALVHGGPFANIAHGCNSILATETARDLADIVVTEAGFGSDLGAEKFMDIKAREAGFDPAAVVVVATIRALKMHGGVAKDNLKEENVEAVKAGIVNLERHVNNIKKFGVEPVVAINAFIHDTDAEVEYVKSWAKENNVRIALTEVWEKGGKGGVDLANEVLEVIDQPNSFKPLYELELPLEQKIEKIVTEIYGGSKVTFSSKAQKQLKQFKENGWDNYPVCMAKTQYSFSDDQTLLGAPSGFEITIRELEAKTGAGFIVALTGAIMTMPGLPKKPAALNMDVTDDGHAIGLF</sequence>
<organism>
    <name type="scientific">Staphylococcus aureus (strain bovine RF122 / ET3-1)</name>
    <dbReference type="NCBI Taxonomy" id="273036"/>
    <lineage>
        <taxon>Bacteria</taxon>
        <taxon>Bacillati</taxon>
        <taxon>Bacillota</taxon>
        <taxon>Bacilli</taxon>
        <taxon>Bacillales</taxon>
        <taxon>Staphylococcaceae</taxon>
        <taxon>Staphylococcus</taxon>
    </lineage>
</organism>
<keyword id="KW-0067">ATP-binding</keyword>
<keyword id="KW-0436">Ligase</keyword>
<keyword id="KW-0547">Nucleotide-binding</keyword>
<keyword id="KW-0554">One-carbon metabolism</keyword>
<name>FTHS_STAAB</name>
<accession>Q2YTF6</accession>
<proteinExistence type="inferred from homology"/>